<evidence type="ECO:0000255" key="1">
    <source>
        <dbReference type="HAMAP-Rule" id="MF_01347"/>
    </source>
</evidence>
<organism>
    <name type="scientific">Photorhabdus laumondii subsp. laumondii (strain DSM 15139 / CIP 105565 / TT01)</name>
    <name type="common">Photorhabdus luminescens subsp. laumondii</name>
    <dbReference type="NCBI Taxonomy" id="243265"/>
    <lineage>
        <taxon>Bacteria</taxon>
        <taxon>Pseudomonadati</taxon>
        <taxon>Pseudomonadota</taxon>
        <taxon>Gammaproteobacteria</taxon>
        <taxon>Enterobacterales</taxon>
        <taxon>Morganellaceae</taxon>
        <taxon>Photorhabdus</taxon>
    </lineage>
</organism>
<sequence length="460" mass="50037">MATGKIIQVIGAVVDVEFPQDTVPKVYDALEVQNGEAKLVLEVQQQLGGGVVRCIAMGTSDGLSRGLSVTDLGHPIEVPVGKATLGRIMNVLGEPIDMKGDIGEEERWAIHRPAPSYEELSNSQELLETGIKVMDLICPFAKGGKVGLFGGAGVGKTVNMMELIRNIAIEHSGYSVFAGVGERTREGNDFYHEMTDSNVLDKVSLVYGQMNEPPGNRLRVALTGLTMAEKFRDEGRDVLLFVDNIYRYTLAGTEVSALLGRMPSAVGYQPTLAEEMGVLQERITSTKTGSITSVQAVYVPADDLTDPSPATTFAHLDATVVLSRQIASLGIYPAVDPLDSTSRQLDPLVVGQEHYNVARGVQSILQRYQELKDIIAILGMDELSEDDKLVVARARKIQRFLSQPFFVAEVFTGSPGKFVSLKDTIRGFKGILDGDYDHLPEQAFYMVGTIEEAVEKAKKL</sequence>
<gene>
    <name evidence="1" type="primary">atpD</name>
    <name type="ordered locus">plu0040</name>
</gene>
<comment type="function">
    <text evidence="1">Produces ATP from ADP in the presence of a proton gradient across the membrane. The catalytic sites are hosted primarily by the beta subunits.</text>
</comment>
<comment type="catalytic activity">
    <reaction evidence="1">
        <text>ATP + H2O + 4 H(+)(in) = ADP + phosphate + 5 H(+)(out)</text>
        <dbReference type="Rhea" id="RHEA:57720"/>
        <dbReference type="ChEBI" id="CHEBI:15377"/>
        <dbReference type="ChEBI" id="CHEBI:15378"/>
        <dbReference type="ChEBI" id="CHEBI:30616"/>
        <dbReference type="ChEBI" id="CHEBI:43474"/>
        <dbReference type="ChEBI" id="CHEBI:456216"/>
        <dbReference type="EC" id="7.1.2.2"/>
    </reaction>
</comment>
<comment type="subunit">
    <text evidence="1">F-type ATPases have 2 components, CF(1) - the catalytic core - and CF(0) - the membrane proton channel. CF(1) has five subunits: alpha(3), beta(3), gamma(1), delta(1), epsilon(1). CF(0) has three main subunits: a(1), b(2) and c(9-12). The alpha and beta chains form an alternating ring which encloses part of the gamma chain. CF(1) is attached to CF(0) by a central stalk formed by the gamma and epsilon chains, while a peripheral stalk is formed by the delta and b chains.</text>
</comment>
<comment type="subcellular location">
    <subcellularLocation>
        <location evidence="1">Cell inner membrane</location>
        <topology evidence="1">Peripheral membrane protein</topology>
    </subcellularLocation>
</comment>
<comment type="similarity">
    <text evidence="1">Belongs to the ATPase alpha/beta chains family.</text>
</comment>
<protein>
    <recommendedName>
        <fullName evidence="1">ATP synthase subunit beta</fullName>
        <ecNumber evidence="1">7.1.2.2</ecNumber>
    </recommendedName>
    <alternativeName>
        <fullName evidence="1">ATP synthase F1 sector subunit beta</fullName>
    </alternativeName>
    <alternativeName>
        <fullName evidence="1">F-ATPase subunit beta</fullName>
    </alternativeName>
</protein>
<keyword id="KW-0066">ATP synthesis</keyword>
<keyword id="KW-0067">ATP-binding</keyword>
<keyword id="KW-0997">Cell inner membrane</keyword>
<keyword id="KW-1003">Cell membrane</keyword>
<keyword id="KW-0139">CF(1)</keyword>
<keyword id="KW-0375">Hydrogen ion transport</keyword>
<keyword id="KW-0406">Ion transport</keyword>
<keyword id="KW-0472">Membrane</keyword>
<keyword id="KW-0547">Nucleotide-binding</keyword>
<keyword id="KW-1185">Reference proteome</keyword>
<keyword id="KW-1278">Translocase</keyword>
<keyword id="KW-0813">Transport</keyword>
<reference key="1">
    <citation type="journal article" date="2003" name="Nat. Biotechnol.">
        <title>The genome sequence of the entomopathogenic bacterium Photorhabdus luminescens.</title>
        <authorList>
            <person name="Duchaud E."/>
            <person name="Rusniok C."/>
            <person name="Frangeul L."/>
            <person name="Buchrieser C."/>
            <person name="Givaudan A."/>
            <person name="Taourit S."/>
            <person name="Bocs S."/>
            <person name="Boursaux-Eude C."/>
            <person name="Chandler M."/>
            <person name="Charles J.-F."/>
            <person name="Dassa E."/>
            <person name="Derose R."/>
            <person name="Derzelle S."/>
            <person name="Freyssinet G."/>
            <person name="Gaudriault S."/>
            <person name="Medigue C."/>
            <person name="Lanois A."/>
            <person name="Powell K."/>
            <person name="Siguier P."/>
            <person name="Vincent R."/>
            <person name="Wingate V."/>
            <person name="Zouine M."/>
            <person name="Glaser P."/>
            <person name="Boemare N."/>
            <person name="Danchin A."/>
            <person name="Kunst F."/>
        </authorList>
    </citation>
    <scope>NUCLEOTIDE SEQUENCE [LARGE SCALE GENOMIC DNA]</scope>
    <source>
        <strain>DSM 15139 / CIP 105565 / TT01</strain>
    </source>
</reference>
<proteinExistence type="inferred from homology"/>
<name>ATPB_PHOLL</name>
<dbReference type="EC" id="7.1.2.2" evidence="1"/>
<dbReference type="EMBL" id="BX571859">
    <property type="protein sequence ID" value="CAE12335.1"/>
    <property type="molecule type" value="Genomic_DNA"/>
</dbReference>
<dbReference type="RefSeq" id="WP_011144453.1">
    <property type="nucleotide sequence ID" value="NC_005126.1"/>
</dbReference>
<dbReference type="SMR" id="Q7NA94"/>
<dbReference type="STRING" id="243265.plu0040"/>
<dbReference type="GeneID" id="88807996"/>
<dbReference type="KEGG" id="plu:plu0040"/>
<dbReference type="eggNOG" id="COG0055">
    <property type="taxonomic scope" value="Bacteria"/>
</dbReference>
<dbReference type="HOGENOM" id="CLU_022398_0_2_6"/>
<dbReference type="OrthoDB" id="9801639at2"/>
<dbReference type="Proteomes" id="UP000002514">
    <property type="component" value="Chromosome"/>
</dbReference>
<dbReference type="GO" id="GO:0005886">
    <property type="term" value="C:plasma membrane"/>
    <property type="evidence" value="ECO:0007669"/>
    <property type="project" value="UniProtKB-SubCell"/>
</dbReference>
<dbReference type="GO" id="GO:0045259">
    <property type="term" value="C:proton-transporting ATP synthase complex"/>
    <property type="evidence" value="ECO:0007669"/>
    <property type="project" value="UniProtKB-KW"/>
</dbReference>
<dbReference type="GO" id="GO:0005524">
    <property type="term" value="F:ATP binding"/>
    <property type="evidence" value="ECO:0007669"/>
    <property type="project" value="UniProtKB-UniRule"/>
</dbReference>
<dbReference type="GO" id="GO:0016887">
    <property type="term" value="F:ATP hydrolysis activity"/>
    <property type="evidence" value="ECO:0007669"/>
    <property type="project" value="InterPro"/>
</dbReference>
<dbReference type="GO" id="GO:0046933">
    <property type="term" value="F:proton-transporting ATP synthase activity, rotational mechanism"/>
    <property type="evidence" value="ECO:0007669"/>
    <property type="project" value="UniProtKB-UniRule"/>
</dbReference>
<dbReference type="CDD" id="cd18110">
    <property type="entry name" value="ATP-synt_F1_beta_C"/>
    <property type="match status" value="1"/>
</dbReference>
<dbReference type="CDD" id="cd18115">
    <property type="entry name" value="ATP-synt_F1_beta_N"/>
    <property type="match status" value="1"/>
</dbReference>
<dbReference type="CDD" id="cd01133">
    <property type="entry name" value="F1-ATPase_beta_CD"/>
    <property type="match status" value="1"/>
</dbReference>
<dbReference type="FunFam" id="1.10.1140.10:FF:000001">
    <property type="entry name" value="ATP synthase subunit beta"/>
    <property type="match status" value="1"/>
</dbReference>
<dbReference type="FunFam" id="2.40.10.170:FF:000003">
    <property type="entry name" value="ATP synthase subunit beta"/>
    <property type="match status" value="1"/>
</dbReference>
<dbReference type="FunFam" id="3.40.50.300:FF:000004">
    <property type="entry name" value="ATP synthase subunit beta"/>
    <property type="match status" value="1"/>
</dbReference>
<dbReference type="Gene3D" id="2.40.10.170">
    <property type="match status" value="1"/>
</dbReference>
<dbReference type="Gene3D" id="1.10.1140.10">
    <property type="entry name" value="Bovine Mitochondrial F1-atpase, Atp Synthase Beta Chain, Chain D, domain 3"/>
    <property type="match status" value="1"/>
</dbReference>
<dbReference type="Gene3D" id="3.40.50.300">
    <property type="entry name" value="P-loop containing nucleotide triphosphate hydrolases"/>
    <property type="match status" value="1"/>
</dbReference>
<dbReference type="HAMAP" id="MF_01347">
    <property type="entry name" value="ATP_synth_beta_bact"/>
    <property type="match status" value="1"/>
</dbReference>
<dbReference type="InterPro" id="IPR003593">
    <property type="entry name" value="AAA+_ATPase"/>
</dbReference>
<dbReference type="InterPro" id="IPR055190">
    <property type="entry name" value="ATP-synt_VA_C"/>
</dbReference>
<dbReference type="InterPro" id="IPR005722">
    <property type="entry name" value="ATP_synth_F1_bsu"/>
</dbReference>
<dbReference type="InterPro" id="IPR020003">
    <property type="entry name" value="ATPase_a/bsu_AS"/>
</dbReference>
<dbReference type="InterPro" id="IPR050053">
    <property type="entry name" value="ATPase_alpha/beta_chains"/>
</dbReference>
<dbReference type="InterPro" id="IPR004100">
    <property type="entry name" value="ATPase_F1/V1/A1_a/bsu_N"/>
</dbReference>
<dbReference type="InterPro" id="IPR036121">
    <property type="entry name" value="ATPase_F1/V1/A1_a/bsu_N_sf"/>
</dbReference>
<dbReference type="InterPro" id="IPR000194">
    <property type="entry name" value="ATPase_F1/V1/A1_a/bsu_nucl-bd"/>
</dbReference>
<dbReference type="InterPro" id="IPR024034">
    <property type="entry name" value="ATPase_F1/V1_b/a_C"/>
</dbReference>
<dbReference type="InterPro" id="IPR027417">
    <property type="entry name" value="P-loop_NTPase"/>
</dbReference>
<dbReference type="NCBIfam" id="TIGR01039">
    <property type="entry name" value="atpD"/>
    <property type="match status" value="1"/>
</dbReference>
<dbReference type="PANTHER" id="PTHR15184">
    <property type="entry name" value="ATP SYNTHASE"/>
    <property type="match status" value="1"/>
</dbReference>
<dbReference type="PANTHER" id="PTHR15184:SF71">
    <property type="entry name" value="ATP SYNTHASE SUBUNIT BETA, MITOCHONDRIAL"/>
    <property type="match status" value="1"/>
</dbReference>
<dbReference type="Pfam" id="PF00006">
    <property type="entry name" value="ATP-synt_ab"/>
    <property type="match status" value="1"/>
</dbReference>
<dbReference type="Pfam" id="PF02874">
    <property type="entry name" value="ATP-synt_ab_N"/>
    <property type="match status" value="1"/>
</dbReference>
<dbReference type="Pfam" id="PF22919">
    <property type="entry name" value="ATP-synt_VA_C"/>
    <property type="match status" value="1"/>
</dbReference>
<dbReference type="SMART" id="SM00382">
    <property type="entry name" value="AAA"/>
    <property type="match status" value="1"/>
</dbReference>
<dbReference type="SUPFAM" id="SSF47917">
    <property type="entry name" value="C-terminal domain of alpha and beta subunits of F1 ATP synthase"/>
    <property type="match status" value="1"/>
</dbReference>
<dbReference type="SUPFAM" id="SSF50615">
    <property type="entry name" value="N-terminal domain of alpha and beta subunits of F1 ATP synthase"/>
    <property type="match status" value="1"/>
</dbReference>
<dbReference type="SUPFAM" id="SSF52540">
    <property type="entry name" value="P-loop containing nucleoside triphosphate hydrolases"/>
    <property type="match status" value="1"/>
</dbReference>
<dbReference type="PROSITE" id="PS00152">
    <property type="entry name" value="ATPASE_ALPHA_BETA"/>
    <property type="match status" value="1"/>
</dbReference>
<accession>Q7NA94</accession>
<feature type="chain" id="PRO_0000254330" description="ATP synthase subunit beta">
    <location>
        <begin position="1"/>
        <end position="460"/>
    </location>
</feature>
<feature type="binding site" evidence="1">
    <location>
        <begin position="150"/>
        <end position="157"/>
    </location>
    <ligand>
        <name>ATP</name>
        <dbReference type="ChEBI" id="CHEBI:30616"/>
    </ligand>
</feature>